<sequence length="296" mass="31499">MTTLENPEMQAQLLSAALPYMQRYENKHVVVKYGGHAMGNPELGKAFARDVALLKQSGVNPIVVHGGGPQIQAMLTKLGIESRFEGGLRVTDEKTVEVVEMVLAGSINKEIVALINAEGEWAIGLCGKDGNMVFAQKAHKTVIDPDSNIEKVLDLGFVGEPAEVDRTLLDLLARSEMIPVIAPVAPGRDGHTYNINADTFAGAIAGALAATRLLFLTDVPGVLDKDKKLIKELSVADAQALIRDGTISGGMIPKVETCIDAIRRGVEGVVILNGKTPHSVLLELFTEHGAGTLIVP</sequence>
<feature type="chain" id="PRO_0000112597" description="Acetylglutamate kinase">
    <location>
        <begin position="1"/>
        <end position="296"/>
    </location>
</feature>
<feature type="binding site" evidence="1">
    <location>
        <begin position="67"/>
        <end position="68"/>
    </location>
    <ligand>
        <name>substrate</name>
    </ligand>
</feature>
<feature type="binding site" evidence="1">
    <location>
        <position position="89"/>
    </location>
    <ligand>
        <name>substrate</name>
    </ligand>
</feature>
<feature type="binding site" evidence="1">
    <location>
        <position position="194"/>
    </location>
    <ligand>
        <name>substrate</name>
    </ligand>
</feature>
<feature type="site" description="Transition state stabilizer" evidence="1">
    <location>
        <position position="32"/>
    </location>
</feature>
<feature type="site" description="Transition state stabilizer" evidence="1">
    <location>
        <position position="254"/>
    </location>
</feature>
<gene>
    <name evidence="1" type="primary">argB</name>
    <name type="ordered locus">BRA1025</name>
    <name type="ordered locus">BS1330_II1017</name>
</gene>
<reference key="1">
    <citation type="journal article" date="2002" name="Proc. Natl. Acad. Sci. U.S.A.">
        <title>The Brucella suis genome reveals fundamental similarities between animal and plant pathogens and symbionts.</title>
        <authorList>
            <person name="Paulsen I.T."/>
            <person name="Seshadri R."/>
            <person name="Nelson K.E."/>
            <person name="Eisen J.A."/>
            <person name="Heidelberg J.F."/>
            <person name="Read T.D."/>
            <person name="Dodson R.J."/>
            <person name="Umayam L.A."/>
            <person name="Brinkac L.M."/>
            <person name="Beanan M.J."/>
            <person name="Daugherty S.C."/>
            <person name="DeBoy R.T."/>
            <person name="Durkin A.S."/>
            <person name="Kolonay J.F."/>
            <person name="Madupu R."/>
            <person name="Nelson W.C."/>
            <person name="Ayodeji B."/>
            <person name="Kraul M."/>
            <person name="Shetty J."/>
            <person name="Malek J.A."/>
            <person name="Van Aken S.E."/>
            <person name="Riedmuller S."/>
            <person name="Tettelin H."/>
            <person name="Gill S.R."/>
            <person name="White O."/>
            <person name="Salzberg S.L."/>
            <person name="Hoover D.L."/>
            <person name="Lindler L.E."/>
            <person name="Halling S.M."/>
            <person name="Boyle S.M."/>
            <person name="Fraser C.M."/>
        </authorList>
    </citation>
    <scope>NUCLEOTIDE SEQUENCE [LARGE SCALE GENOMIC DNA]</scope>
    <source>
        <strain>1330</strain>
    </source>
</reference>
<reference key="2">
    <citation type="journal article" date="2011" name="J. Bacteriol.">
        <title>Revised genome sequence of Brucella suis 1330.</title>
        <authorList>
            <person name="Tae H."/>
            <person name="Shallom S."/>
            <person name="Settlage R."/>
            <person name="Preston D."/>
            <person name="Adams L.G."/>
            <person name="Garner H.R."/>
        </authorList>
    </citation>
    <scope>NUCLEOTIDE SEQUENCE [LARGE SCALE GENOMIC DNA]</scope>
    <source>
        <strain>1330</strain>
    </source>
</reference>
<evidence type="ECO:0000255" key="1">
    <source>
        <dbReference type="HAMAP-Rule" id="MF_00082"/>
    </source>
</evidence>
<proteinExistence type="inferred from homology"/>
<comment type="function">
    <text evidence="1">Catalyzes the ATP-dependent phosphorylation of N-acetyl-L-glutamate.</text>
</comment>
<comment type="catalytic activity">
    <reaction evidence="1">
        <text>N-acetyl-L-glutamate + ATP = N-acetyl-L-glutamyl 5-phosphate + ADP</text>
        <dbReference type="Rhea" id="RHEA:14629"/>
        <dbReference type="ChEBI" id="CHEBI:30616"/>
        <dbReference type="ChEBI" id="CHEBI:44337"/>
        <dbReference type="ChEBI" id="CHEBI:57936"/>
        <dbReference type="ChEBI" id="CHEBI:456216"/>
        <dbReference type="EC" id="2.7.2.8"/>
    </reaction>
</comment>
<comment type="pathway">
    <text evidence="1">Amino-acid biosynthesis; L-arginine biosynthesis; N(2)-acetyl-L-ornithine from L-glutamate: step 2/4.</text>
</comment>
<comment type="subcellular location">
    <subcellularLocation>
        <location evidence="1">Cytoplasm</location>
    </subcellularLocation>
</comment>
<comment type="similarity">
    <text evidence="1">Belongs to the acetylglutamate kinase family. ArgB subfamily.</text>
</comment>
<name>ARGB_BRUSU</name>
<accession>P59296</accession>
<accession>G0KE31</accession>
<keyword id="KW-0028">Amino-acid biosynthesis</keyword>
<keyword id="KW-0055">Arginine biosynthesis</keyword>
<keyword id="KW-0067">ATP-binding</keyword>
<keyword id="KW-0963">Cytoplasm</keyword>
<keyword id="KW-0418">Kinase</keyword>
<keyword id="KW-0547">Nucleotide-binding</keyword>
<keyword id="KW-0808">Transferase</keyword>
<dbReference type="EC" id="2.7.2.8" evidence="1"/>
<dbReference type="EMBL" id="AE014292">
    <property type="protein sequence ID" value="AAN34193.1"/>
    <property type="molecule type" value="Genomic_DNA"/>
</dbReference>
<dbReference type="EMBL" id="CP002998">
    <property type="protein sequence ID" value="AEM20469.1"/>
    <property type="molecule type" value="Genomic_DNA"/>
</dbReference>
<dbReference type="RefSeq" id="WP_004687040.1">
    <property type="nucleotide sequence ID" value="NZ_KN046805.1"/>
</dbReference>
<dbReference type="SMR" id="P59296"/>
<dbReference type="GeneID" id="97534925"/>
<dbReference type="KEGG" id="bms:BRA1025"/>
<dbReference type="KEGG" id="bsi:BS1330_II1017"/>
<dbReference type="PATRIC" id="fig|204722.21.peg.1094"/>
<dbReference type="HOGENOM" id="CLU_053680_0_0_5"/>
<dbReference type="UniPathway" id="UPA00068">
    <property type="reaction ID" value="UER00107"/>
</dbReference>
<dbReference type="Proteomes" id="UP000007104">
    <property type="component" value="Chromosome II"/>
</dbReference>
<dbReference type="GO" id="GO:0005737">
    <property type="term" value="C:cytoplasm"/>
    <property type="evidence" value="ECO:0007669"/>
    <property type="project" value="UniProtKB-SubCell"/>
</dbReference>
<dbReference type="GO" id="GO:0003991">
    <property type="term" value="F:acetylglutamate kinase activity"/>
    <property type="evidence" value="ECO:0007669"/>
    <property type="project" value="UniProtKB-UniRule"/>
</dbReference>
<dbReference type="GO" id="GO:0005524">
    <property type="term" value="F:ATP binding"/>
    <property type="evidence" value="ECO:0007669"/>
    <property type="project" value="UniProtKB-UniRule"/>
</dbReference>
<dbReference type="GO" id="GO:0042450">
    <property type="term" value="P:arginine biosynthetic process via ornithine"/>
    <property type="evidence" value="ECO:0007669"/>
    <property type="project" value="UniProtKB-UniRule"/>
</dbReference>
<dbReference type="GO" id="GO:0006526">
    <property type="term" value="P:L-arginine biosynthetic process"/>
    <property type="evidence" value="ECO:0007669"/>
    <property type="project" value="UniProtKB-UniPathway"/>
</dbReference>
<dbReference type="CDD" id="cd04250">
    <property type="entry name" value="AAK_NAGK-C"/>
    <property type="match status" value="1"/>
</dbReference>
<dbReference type="FunFam" id="3.40.1160.10:FF:000004">
    <property type="entry name" value="Acetylglutamate kinase"/>
    <property type="match status" value="1"/>
</dbReference>
<dbReference type="Gene3D" id="3.40.1160.10">
    <property type="entry name" value="Acetylglutamate kinase-like"/>
    <property type="match status" value="1"/>
</dbReference>
<dbReference type="HAMAP" id="MF_00082">
    <property type="entry name" value="ArgB"/>
    <property type="match status" value="1"/>
</dbReference>
<dbReference type="InterPro" id="IPR036393">
    <property type="entry name" value="AceGlu_kinase-like_sf"/>
</dbReference>
<dbReference type="InterPro" id="IPR004662">
    <property type="entry name" value="AcgluKinase_fam"/>
</dbReference>
<dbReference type="InterPro" id="IPR037528">
    <property type="entry name" value="ArgB"/>
</dbReference>
<dbReference type="InterPro" id="IPR001048">
    <property type="entry name" value="Asp/Glu/Uridylate_kinase"/>
</dbReference>
<dbReference type="InterPro" id="IPR041727">
    <property type="entry name" value="NAGK-C"/>
</dbReference>
<dbReference type="NCBIfam" id="TIGR00761">
    <property type="entry name" value="argB"/>
    <property type="match status" value="1"/>
</dbReference>
<dbReference type="PANTHER" id="PTHR23342">
    <property type="entry name" value="N-ACETYLGLUTAMATE SYNTHASE"/>
    <property type="match status" value="1"/>
</dbReference>
<dbReference type="PANTHER" id="PTHR23342:SF0">
    <property type="entry name" value="N-ACETYLGLUTAMATE SYNTHASE, MITOCHONDRIAL"/>
    <property type="match status" value="1"/>
</dbReference>
<dbReference type="Pfam" id="PF00696">
    <property type="entry name" value="AA_kinase"/>
    <property type="match status" value="1"/>
</dbReference>
<dbReference type="PIRSF" id="PIRSF000728">
    <property type="entry name" value="NAGK"/>
    <property type="match status" value="1"/>
</dbReference>
<dbReference type="SUPFAM" id="SSF53633">
    <property type="entry name" value="Carbamate kinase-like"/>
    <property type="match status" value="1"/>
</dbReference>
<protein>
    <recommendedName>
        <fullName evidence="1">Acetylglutamate kinase</fullName>
        <ecNumber evidence="1">2.7.2.8</ecNumber>
    </recommendedName>
    <alternativeName>
        <fullName evidence="1">N-acetyl-L-glutamate 5-phosphotransferase</fullName>
    </alternativeName>
    <alternativeName>
        <fullName evidence="1">NAG kinase</fullName>
        <shortName evidence="1">NAGK</shortName>
    </alternativeName>
</protein>
<organism>
    <name type="scientific">Brucella suis biovar 1 (strain 1330)</name>
    <dbReference type="NCBI Taxonomy" id="204722"/>
    <lineage>
        <taxon>Bacteria</taxon>
        <taxon>Pseudomonadati</taxon>
        <taxon>Pseudomonadota</taxon>
        <taxon>Alphaproteobacteria</taxon>
        <taxon>Hyphomicrobiales</taxon>
        <taxon>Brucellaceae</taxon>
        <taxon>Brucella/Ochrobactrum group</taxon>
        <taxon>Brucella</taxon>
    </lineage>
</organism>